<keyword id="KW-1185">Reference proteome</keyword>
<keyword id="KW-0687">Ribonucleoprotein</keyword>
<keyword id="KW-0689">Ribosomal protein</keyword>
<keyword id="KW-0694">RNA-binding</keyword>
<keyword id="KW-0699">rRNA-binding</keyword>
<sequence length="96" mass="10793">MNQEKVLKTLLMPIVSEKMTMLSANNQYAFKVRMDSSKREIKAAVEILLGVNVENVTTLIVKGKKKIFKGRTGSRPNWKKAMVKVSAGQIIDVNRT</sequence>
<gene>
    <name evidence="1" type="primary">rplW</name>
    <name type="ordered locus">COSY_0171</name>
</gene>
<proteinExistence type="inferred from homology"/>
<feature type="chain" id="PRO_1000068183" description="Large ribosomal subunit protein uL23">
    <location>
        <begin position="1"/>
        <end position="96"/>
    </location>
</feature>
<evidence type="ECO:0000255" key="1">
    <source>
        <dbReference type="HAMAP-Rule" id="MF_01369"/>
    </source>
</evidence>
<evidence type="ECO:0000305" key="2"/>
<accession>A5CXK6</accession>
<protein>
    <recommendedName>
        <fullName evidence="1">Large ribosomal subunit protein uL23</fullName>
    </recommendedName>
    <alternativeName>
        <fullName evidence="2">50S ribosomal protein L23</fullName>
    </alternativeName>
</protein>
<reference key="1">
    <citation type="journal article" date="2007" name="Curr. Biol.">
        <title>Reduced genome of the thioautotrophic intracellular symbiont in a deep-sea clam, Calyptogena okutanii.</title>
        <authorList>
            <person name="Kuwahara H."/>
            <person name="Yoshida T."/>
            <person name="Takaki Y."/>
            <person name="Shimamura S."/>
            <person name="Nishi S."/>
            <person name="Harada M."/>
            <person name="Matsuyama K."/>
            <person name="Takishita K."/>
            <person name="Kawato M."/>
            <person name="Uematsu K."/>
            <person name="Fujiwara Y."/>
            <person name="Sato T."/>
            <person name="Kato C."/>
            <person name="Kitagawa M."/>
            <person name="Kato I."/>
            <person name="Maruyama T."/>
        </authorList>
    </citation>
    <scope>NUCLEOTIDE SEQUENCE [LARGE SCALE GENOMIC DNA]</scope>
    <source>
        <strain>HA</strain>
    </source>
</reference>
<name>RL23_VESOH</name>
<dbReference type="EMBL" id="AP009247">
    <property type="protein sequence ID" value="BAF61301.1"/>
    <property type="molecule type" value="Genomic_DNA"/>
</dbReference>
<dbReference type="RefSeq" id="WP_011929571.1">
    <property type="nucleotide sequence ID" value="NC_009465.1"/>
</dbReference>
<dbReference type="SMR" id="A5CXK6"/>
<dbReference type="STRING" id="412965.COSY_0171"/>
<dbReference type="KEGG" id="vok:COSY_0171"/>
<dbReference type="eggNOG" id="COG0089">
    <property type="taxonomic scope" value="Bacteria"/>
</dbReference>
<dbReference type="HOGENOM" id="CLU_037562_3_1_6"/>
<dbReference type="OrthoDB" id="9793353at2"/>
<dbReference type="Proteomes" id="UP000000247">
    <property type="component" value="Chromosome"/>
</dbReference>
<dbReference type="GO" id="GO:1990904">
    <property type="term" value="C:ribonucleoprotein complex"/>
    <property type="evidence" value="ECO:0007669"/>
    <property type="project" value="UniProtKB-KW"/>
</dbReference>
<dbReference type="GO" id="GO:0005840">
    <property type="term" value="C:ribosome"/>
    <property type="evidence" value="ECO:0007669"/>
    <property type="project" value="UniProtKB-KW"/>
</dbReference>
<dbReference type="GO" id="GO:0019843">
    <property type="term" value="F:rRNA binding"/>
    <property type="evidence" value="ECO:0007669"/>
    <property type="project" value="UniProtKB-UniRule"/>
</dbReference>
<dbReference type="GO" id="GO:0003735">
    <property type="term" value="F:structural constituent of ribosome"/>
    <property type="evidence" value="ECO:0007669"/>
    <property type="project" value="InterPro"/>
</dbReference>
<dbReference type="GO" id="GO:0006412">
    <property type="term" value="P:translation"/>
    <property type="evidence" value="ECO:0007669"/>
    <property type="project" value="UniProtKB-UniRule"/>
</dbReference>
<dbReference type="FunFam" id="3.30.70.330:FF:000001">
    <property type="entry name" value="50S ribosomal protein L23"/>
    <property type="match status" value="1"/>
</dbReference>
<dbReference type="Gene3D" id="3.30.70.330">
    <property type="match status" value="1"/>
</dbReference>
<dbReference type="HAMAP" id="MF_01369_B">
    <property type="entry name" value="Ribosomal_uL23_B"/>
    <property type="match status" value="1"/>
</dbReference>
<dbReference type="InterPro" id="IPR012677">
    <property type="entry name" value="Nucleotide-bd_a/b_plait_sf"/>
</dbReference>
<dbReference type="InterPro" id="IPR013025">
    <property type="entry name" value="Ribosomal_uL23-like"/>
</dbReference>
<dbReference type="InterPro" id="IPR012678">
    <property type="entry name" value="Ribosomal_uL23/eL15/eS24_sf"/>
</dbReference>
<dbReference type="NCBIfam" id="NF004359">
    <property type="entry name" value="PRK05738.1-3"/>
    <property type="match status" value="1"/>
</dbReference>
<dbReference type="NCBIfam" id="NF004363">
    <property type="entry name" value="PRK05738.2-4"/>
    <property type="match status" value="1"/>
</dbReference>
<dbReference type="PANTHER" id="PTHR11620">
    <property type="entry name" value="60S RIBOSOMAL PROTEIN L23A"/>
    <property type="match status" value="1"/>
</dbReference>
<dbReference type="Pfam" id="PF00276">
    <property type="entry name" value="Ribosomal_L23"/>
    <property type="match status" value="1"/>
</dbReference>
<dbReference type="SUPFAM" id="SSF54189">
    <property type="entry name" value="Ribosomal proteins S24e, L23 and L15e"/>
    <property type="match status" value="1"/>
</dbReference>
<organism>
    <name type="scientific">Vesicomyosocius okutanii subsp. Calyptogena okutanii (strain HA)</name>
    <dbReference type="NCBI Taxonomy" id="412965"/>
    <lineage>
        <taxon>Bacteria</taxon>
        <taxon>Pseudomonadati</taxon>
        <taxon>Pseudomonadota</taxon>
        <taxon>Gammaproteobacteria</taxon>
        <taxon>Candidatus Pseudothioglobaceae</taxon>
        <taxon>Candidatus Vesicomyosocius</taxon>
    </lineage>
</organism>
<comment type="function">
    <text evidence="1">One of the early assembly proteins it binds 23S rRNA. One of the proteins that surrounds the polypeptide exit tunnel on the outside of the ribosome. Forms the main docking site for trigger factor binding to the ribosome.</text>
</comment>
<comment type="subunit">
    <text evidence="1">Part of the 50S ribosomal subunit. Contacts protein L29, and trigger factor when it is bound to the ribosome.</text>
</comment>
<comment type="similarity">
    <text evidence="1">Belongs to the universal ribosomal protein uL23 family.</text>
</comment>